<comment type="function">
    <text evidence="2">Blocks Kv11/ERG potassium channels.</text>
</comment>
<comment type="subcellular location">
    <subcellularLocation>
        <location evidence="2">Secreted</location>
    </subcellularLocation>
</comment>
<comment type="tissue specificity">
    <text evidence="5">Expressed by the venom gland.</text>
</comment>
<comment type="domain">
    <text evidence="1">The presence of a 'disulfide through disulfide knot' structurally defines this protein as a knottin.</text>
</comment>
<comment type="domain">
    <text evidence="3">Has the CSalpha/beta fold, which comprises one or two short alpha helices connected to anti-parallel beta-sheets stabilized by three or four disulfide bonds.</text>
</comment>
<comment type="similarity">
    <text evidence="5">Belongs to the ergtoxin family. Gamma-KTx 3 subfamily.</text>
</comment>
<sequence length="43" mass="4947">DRDSCVDKSRCAKYGYYQQCEICCKKAGHRGGTCEFFKCKCKV</sequence>
<name>KGX32_CENEL</name>
<keyword id="KW-1015">Disulfide bond</keyword>
<keyword id="KW-0872">Ion channel impairing toxin</keyword>
<keyword id="KW-0960">Knottin</keyword>
<keyword id="KW-0528">Neurotoxin</keyword>
<keyword id="KW-0632">Potassium channel impairing toxin</keyword>
<keyword id="KW-0964">Secreted</keyword>
<keyword id="KW-0800">Toxin</keyword>
<keyword id="KW-1220">Voltage-gated potassium channel impairing toxin</keyword>
<dbReference type="EMBL" id="AY159338">
    <property type="protein sequence ID" value="AAO22216.1"/>
    <property type="molecule type" value="mRNA"/>
</dbReference>
<dbReference type="SMR" id="Q86QV5"/>
<dbReference type="GO" id="GO:0005576">
    <property type="term" value="C:extracellular region"/>
    <property type="evidence" value="ECO:0007669"/>
    <property type="project" value="UniProtKB-SubCell"/>
</dbReference>
<dbReference type="GO" id="GO:0019870">
    <property type="term" value="F:potassium channel inhibitor activity"/>
    <property type="evidence" value="ECO:0007669"/>
    <property type="project" value="InterPro"/>
</dbReference>
<dbReference type="GO" id="GO:0090729">
    <property type="term" value="F:toxin activity"/>
    <property type="evidence" value="ECO:0007669"/>
    <property type="project" value="UniProtKB-KW"/>
</dbReference>
<dbReference type="Gene3D" id="3.30.30.10">
    <property type="entry name" value="Knottin, scorpion toxin-like"/>
    <property type="match status" value="1"/>
</dbReference>
<dbReference type="InterPro" id="IPR012622">
    <property type="entry name" value="Ergtoxin"/>
</dbReference>
<dbReference type="InterPro" id="IPR036574">
    <property type="entry name" value="Scorpion_toxin-like_sf"/>
</dbReference>
<dbReference type="Pfam" id="PF08086">
    <property type="entry name" value="Toxin_17"/>
    <property type="match status" value="1"/>
</dbReference>
<dbReference type="SUPFAM" id="SSF57095">
    <property type="entry name" value="Scorpion toxin-like"/>
    <property type="match status" value="1"/>
</dbReference>
<dbReference type="PROSITE" id="PS60026">
    <property type="entry name" value="ERGTX"/>
    <property type="match status" value="1"/>
</dbReference>
<reference key="1">
    <citation type="journal article" date="2002" name="FEBS Lett.">
        <title>A large number of novel Ergtoxin-like genes and ERG K+-channels blocking peptides from scorpions of the genus Centruroides.</title>
        <authorList>
            <person name="Corona M."/>
            <person name="Gurrola G.B."/>
            <person name="Merino E."/>
            <person name="Cassulini R.R."/>
            <person name="Valdez-Cruz N.A."/>
            <person name="Garcia B."/>
            <person name="Ramirez-Dominguez M.E."/>
            <person name="Coronas F.I."/>
            <person name="Zamudio F.Z."/>
            <person name="Wanke E."/>
            <person name="Possani L.D."/>
        </authorList>
    </citation>
    <scope>NUCLEOTIDE SEQUENCE [MRNA]</scope>
    <scope>NOMENCLATURE</scope>
    <source>
        <tissue>Venom gland</tissue>
    </source>
</reference>
<feature type="chain" id="PRO_0000066845" description="Potassium channel toxin gamma-KTx 3.2">
    <location>
        <begin position="1"/>
        <end position="43"/>
    </location>
</feature>
<feature type="disulfide bond" evidence="3">
    <location>
        <begin position="5"/>
        <end position="23"/>
    </location>
</feature>
<feature type="disulfide bond" evidence="3">
    <location>
        <begin position="11"/>
        <end position="34"/>
    </location>
</feature>
<feature type="disulfide bond" evidence="3">
    <location>
        <begin position="20"/>
        <end position="39"/>
    </location>
</feature>
<feature type="disulfide bond" evidence="3">
    <location>
        <begin position="24"/>
        <end position="41"/>
    </location>
</feature>
<protein>
    <recommendedName>
        <fullName evidence="4">Potassium channel toxin gamma-KTx 3.2</fullName>
    </recommendedName>
    <alternativeName>
        <fullName evidence="5">CeErgTx2</fullName>
        <shortName evidence="4">CeErg2</shortName>
        <shortName evidence="4">ErgTx2</shortName>
    </alternativeName>
    <alternativeName>
        <fullName evidence="4">Ergtoxin-like protein</fullName>
    </alternativeName>
</protein>
<accession>Q86QV5</accession>
<organism>
    <name type="scientific">Centruroides elegans</name>
    <name type="common">Bark scorpion</name>
    <dbReference type="NCBI Taxonomy" id="217897"/>
    <lineage>
        <taxon>Eukaryota</taxon>
        <taxon>Metazoa</taxon>
        <taxon>Ecdysozoa</taxon>
        <taxon>Arthropoda</taxon>
        <taxon>Chelicerata</taxon>
        <taxon>Arachnida</taxon>
        <taxon>Scorpiones</taxon>
        <taxon>Buthida</taxon>
        <taxon>Buthoidea</taxon>
        <taxon>Buthidae</taxon>
        <taxon>Centruroides</taxon>
    </lineage>
</organism>
<evidence type="ECO:0000250" key="1"/>
<evidence type="ECO:0000250" key="2">
    <source>
        <dbReference type="UniProtKB" id="P59939"/>
    </source>
</evidence>
<evidence type="ECO:0000250" key="3">
    <source>
        <dbReference type="UniProtKB" id="Q86QT3"/>
    </source>
</evidence>
<evidence type="ECO:0000303" key="4">
    <source>
    </source>
</evidence>
<evidence type="ECO:0000305" key="5"/>
<proteinExistence type="inferred from homology"/>